<name>YL201_MIMIV</name>
<dbReference type="EMBL" id="AY653733">
    <property type="protein sequence ID" value="AAV50474.1"/>
    <property type="molecule type" value="Genomic_DNA"/>
</dbReference>
<dbReference type="SMR" id="Q5UQ16"/>
<dbReference type="KEGG" id="vg:9924808"/>
<dbReference type="Proteomes" id="UP000001134">
    <property type="component" value="Genome"/>
</dbReference>
<proteinExistence type="predicted"/>
<organismHost>
    <name type="scientific">Acanthamoeba polyphaga</name>
    <name type="common">Amoeba</name>
    <dbReference type="NCBI Taxonomy" id="5757"/>
</organismHost>
<gene>
    <name type="ordered locus">MIMI_L201</name>
</gene>
<protein>
    <recommendedName>
        <fullName>Uncharacterized protein L201</fullName>
    </recommendedName>
</protein>
<evidence type="ECO:0000256" key="1">
    <source>
        <dbReference type="SAM" id="MobiDB-lite"/>
    </source>
</evidence>
<keyword id="KW-1185">Reference proteome</keyword>
<feature type="chain" id="PRO_0000253232" description="Uncharacterized protein L201">
    <location>
        <begin position="1"/>
        <end position="344"/>
    </location>
</feature>
<feature type="region of interest" description="Disordered" evidence="1">
    <location>
        <begin position="95"/>
        <end position="344"/>
    </location>
</feature>
<feature type="compositionally biased region" description="Basic and acidic residues" evidence="1">
    <location>
        <begin position="103"/>
        <end position="123"/>
    </location>
</feature>
<feature type="compositionally biased region" description="Acidic residues" evidence="1">
    <location>
        <begin position="135"/>
        <end position="155"/>
    </location>
</feature>
<feature type="compositionally biased region" description="Low complexity" evidence="1">
    <location>
        <begin position="191"/>
        <end position="200"/>
    </location>
</feature>
<feature type="compositionally biased region" description="Acidic residues" evidence="1">
    <location>
        <begin position="244"/>
        <end position="259"/>
    </location>
</feature>
<feature type="compositionally biased region" description="Basic residues" evidence="1">
    <location>
        <begin position="265"/>
        <end position="276"/>
    </location>
</feature>
<feature type="compositionally biased region" description="Acidic residues" evidence="1">
    <location>
        <begin position="281"/>
        <end position="314"/>
    </location>
</feature>
<feature type="compositionally biased region" description="Basic residues" evidence="1">
    <location>
        <begin position="331"/>
        <end position="344"/>
    </location>
</feature>
<accession>Q5UQ16</accession>
<reference key="1">
    <citation type="journal article" date="2004" name="Science">
        <title>The 1.2-megabase genome sequence of Mimivirus.</title>
        <authorList>
            <person name="Raoult D."/>
            <person name="Audic S."/>
            <person name="Robert C."/>
            <person name="Abergel C."/>
            <person name="Renesto P."/>
            <person name="Ogata H."/>
            <person name="La Scola B."/>
            <person name="Susan M."/>
            <person name="Claverie J.-M."/>
        </authorList>
    </citation>
    <scope>NUCLEOTIDE SEQUENCE [LARGE SCALE GENOMIC DNA]</scope>
    <source>
        <strain>Rowbotham-Bradford</strain>
    </source>
</reference>
<sequence length="344" mass="38050">MSKNKSSSSKTSKTSKSSKKDVFDFTALNSDQLQNVDHNDPKLLEHLKLGPLSMFEDIDNDQERYNKMKQAFFESLFKCVALEQYRDKLFKEMTTINPEDANEDAKVKNSLKLEKEEGSDEKSKKSKKSSKKDDSDDESDNSNDSEESEAEDSDQESEKKNSKSSSKKVPKKSKDNSDVEGSDSEEESPKSAKNAKASKPAAKKSSKKQDSETEEDSESEKKSSKKVAPKGKAPVKANKKKNDSEDEDSGSDNSEEESEEPPKKASSKKPPSKSSKKAQSEDEDEDSGQSESEHSEEESNSDEDSGQSEEESEEEPPKKSKGAKAKPVAKTAKKTPAKKNSKGR</sequence>
<organism>
    <name type="scientific">Acanthamoeba polyphaga mimivirus</name>
    <name type="common">APMV</name>
    <dbReference type="NCBI Taxonomy" id="212035"/>
    <lineage>
        <taxon>Viruses</taxon>
        <taxon>Varidnaviria</taxon>
        <taxon>Bamfordvirae</taxon>
        <taxon>Nucleocytoviricota</taxon>
        <taxon>Megaviricetes</taxon>
        <taxon>Imitervirales</taxon>
        <taxon>Mimiviridae</taxon>
        <taxon>Megamimivirinae</taxon>
        <taxon>Mimivirus</taxon>
        <taxon>Mimivirus bradfordmassiliense</taxon>
    </lineage>
</organism>